<evidence type="ECO:0000255" key="1">
    <source>
        <dbReference type="HAMAP-Rule" id="MF_00815"/>
    </source>
</evidence>
<comment type="function">
    <text evidence="1">Produces ATP from ADP in the presence of a proton gradient across the membrane. The gamma chain is believed to be important in regulating ATPase activity and the flow of protons through the CF(0) complex.</text>
</comment>
<comment type="subunit">
    <text evidence="1">F-type ATPases have 2 components, CF(1) - the catalytic core - and CF(0) - the membrane proton channel. CF(1) has five subunits: alpha(3), beta(3), gamma(1), delta(1), epsilon(1). CF(0) has three main subunits: a, b and c.</text>
</comment>
<comment type="subcellular location">
    <subcellularLocation>
        <location evidence="1">Cell membrane</location>
        <topology evidence="1">Peripheral membrane protein</topology>
    </subcellularLocation>
</comment>
<comment type="similarity">
    <text evidence="1">Belongs to the ATPase gamma chain family.</text>
</comment>
<gene>
    <name evidence="1" type="primary">atpG</name>
    <name type="ordered locus">Bcav_1306</name>
</gene>
<reference key="1">
    <citation type="journal article" date="2009" name="Stand. Genomic Sci.">
        <title>Complete genome sequence of Beutenbergia cavernae type strain (HKI 0122).</title>
        <authorList>
            <person name="Land M."/>
            <person name="Pukall R."/>
            <person name="Abt B."/>
            <person name="Goker M."/>
            <person name="Rohde M."/>
            <person name="Glavina Del Rio T."/>
            <person name="Tice H."/>
            <person name="Copeland A."/>
            <person name="Cheng J.F."/>
            <person name="Lucas S."/>
            <person name="Chen F."/>
            <person name="Nolan M."/>
            <person name="Bruce D."/>
            <person name="Goodwin L."/>
            <person name="Pitluck S."/>
            <person name="Ivanova N."/>
            <person name="Mavromatis K."/>
            <person name="Ovchinnikova G."/>
            <person name="Pati A."/>
            <person name="Chen A."/>
            <person name="Palaniappan K."/>
            <person name="Hauser L."/>
            <person name="Chang Y.J."/>
            <person name="Jefferies C.C."/>
            <person name="Saunders E."/>
            <person name="Brettin T."/>
            <person name="Detter J.C."/>
            <person name="Han C."/>
            <person name="Chain P."/>
            <person name="Bristow J."/>
            <person name="Eisen J.A."/>
            <person name="Markowitz V."/>
            <person name="Hugenholtz P."/>
            <person name="Kyrpides N.C."/>
            <person name="Klenk H.P."/>
            <person name="Lapidus A."/>
        </authorList>
    </citation>
    <scope>NUCLEOTIDE SEQUENCE [LARGE SCALE GENOMIC DNA]</scope>
    <source>
        <strain>ATCC BAA-8 / DSM 12333 / CCUG 43141 / JCM 11478 / NBRC 16432 / NCIMB 13614 / HKI 0122</strain>
    </source>
</reference>
<name>ATPG_BEUC1</name>
<organism>
    <name type="scientific">Beutenbergia cavernae (strain ATCC BAA-8 / DSM 12333 / CCUG 43141 / JCM 11478 / NBRC 16432 / NCIMB 13614 / HKI 0122)</name>
    <dbReference type="NCBI Taxonomy" id="471853"/>
    <lineage>
        <taxon>Bacteria</taxon>
        <taxon>Bacillati</taxon>
        <taxon>Actinomycetota</taxon>
        <taxon>Actinomycetes</taxon>
        <taxon>Micrococcales</taxon>
        <taxon>Beutenbergiaceae</taxon>
        <taxon>Beutenbergia</taxon>
    </lineage>
</organism>
<dbReference type="EMBL" id="CP001618">
    <property type="protein sequence ID" value="ACQ79565.1"/>
    <property type="molecule type" value="Genomic_DNA"/>
</dbReference>
<dbReference type="RefSeq" id="WP_015881805.1">
    <property type="nucleotide sequence ID" value="NC_012669.1"/>
</dbReference>
<dbReference type="SMR" id="C5C1U7"/>
<dbReference type="STRING" id="471853.Bcav_1306"/>
<dbReference type="KEGG" id="bcv:Bcav_1306"/>
<dbReference type="eggNOG" id="COG0224">
    <property type="taxonomic scope" value="Bacteria"/>
</dbReference>
<dbReference type="HOGENOM" id="CLU_050669_0_0_11"/>
<dbReference type="OrthoDB" id="9812769at2"/>
<dbReference type="Proteomes" id="UP000007962">
    <property type="component" value="Chromosome"/>
</dbReference>
<dbReference type="GO" id="GO:0005886">
    <property type="term" value="C:plasma membrane"/>
    <property type="evidence" value="ECO:0007669"/>
    <property type="project" value="UniProtKB-SubCell"/>
</dbReference>
<dbReference type="GO" id="GO:0045259">
    <property type="term" value="C:proton-transporting ATP synthase complex"/>
    <property type="evidence" value="ECO:0007669"/>
    <property type="project" value="UniProtKB-KW"/>
</dbReference>
<dbReference type="GO" id="GO:0005524">
    <property type="term" value="F:ATP binding"/>
    <property type="evidence" value="ECO:0007669"/>
    <property type="project" value="UniProtKB-UniRule"/>
</dbReference>
<dbReference type="GO" id="GO:0046933">
    <property type="term" value="F:proton-transporting ATP synthase activity, rotational mechanism"/>
    <property type="evidence" value="ECO:0007669"/>
    <property type="project" value="UniProtKB-UniRule"/>
</dbReference>
<dbReference type="GO" id="GO:0042777">
    <property type="term" value="P:proton motive force-driven plasma membrane ATP synthesis"/>
    <property type="evidence" value="ECO:0007669"/>
    <property type="project" value="UniProtKB-UniRule"/>
</dbReference>
<dbReference type="CDD" id="cd12151">
    <property type="entry name" value="F1-ATPase_gamma"/>
    <property type="match status" value="1"/>
</dbReference>
<dbReference type="Gene3D" id="3.40.1380.10">
    <property type="match status" value="1"/>
</dbReference>
<dbReference type="Gene3D" id="1.10.287.80">
    <property type="entry name" value="ATP synthase, gamma subunit, helix hairpin domain"/>
    <property type="match status" value="1"/>
</dbReference>
<dbReference type="HAMAP" id="MF_00815">
    <property type="entry name" value="ATP_synth_gamma_bact"/>
    <property type="match status" value="1"/>
</dbReference>
<dbReference type="InterPro" id="IPR035968">
    <property type="entry name" value="ATP_synth_F1_ATPase_gsu"/>
</dbReference>
<dbReference type="InterPro" id="IPR000131">
    <property type="entry name" value="ATP_synth_F1_gsu"/>
</dbReference>
<dbReference type="InterPro" id="IPR023632">
    <property type="entry name" value="ATP_synth_F1_gsu_CS"/>
</dbReference>
<dbReference type="NCBIfam" id="TIGR01146">
    <property type="entry name" value="ATPsyn_F1gamma"/>
    <property type="match status" value="1"/>
</dbReference>
<dbReference type="NCBIfam" id="NF004145">
    <property type="entry name" value="PRK05621.1-2"/>
    <property type="match status" value="1"/>
</dbReference>
<dbReference type="PANTHER" id="PTHR11693">
    <property type="entry name" value="ATP SYNTHASE GAMMA CHAIN"/>
    <property type="match status" value="1"/>
</dbReference>
<dbReference type="PANTHER" id="PTHR11693:SF22">
    <property type="entry name" value="ATP SYNTHASE SUBUNIT GAMMA, MITOCHONDRIAL"/>
    <property type="match status" value="1"/>
</dbReference>
<dbReference type="Pfam" id="PF00231">
    <property type="entry name" value="ATP-synt"/>
    <property type="match status" value="1"/>
</dbReference>
<dbReference type="PRINTS" id="PR00126">
    <property type="entry name" value="ATPASEGAMMA"/>
</dbReference>
<dbReference type="SUPFAM" id="SSF52943">
    <property type="entry name" value="ATP synthase (F1-ATPase), gamma subunit"/>
    <property type="match status" value="1"/>
</dbReference>
<dbReference type="PROSITE" id="PS00153">
    <property type="entry name" value="ATPASE_GAMMA"/>
    <property type="match status" value="1"/>
</dbReference>
<sequence length="297" mass="32740">MAGAQRVYKQRIRSTQTLKKMFRAMELIAASRITRAREHARAAAPYSRALTRAVSAVATHTQIDHPLTTDRADTNRVAMLVVTADRGQAGAYNTTILREAERLAAQLIEEGKEPQLYVTGRRGVGYYTFRHREIVKSWTGGSDNPEVSTAEEIADTLLEAFRAPVAEGGVSEIHLVYTRFASMVSQEPRVVRMLPLEVVEGVVEAGGDVLPLYEFEPSPEAVLDALLPRYIRSRVFNALLQASASELAARQRAMHTATENAEDLIRKYTRLANTARQAEITQEISEIVSGADAMAAS</sequence>
<proteinExistence type="inferred from homology"/>
<accession>C5C1U7</accession>
<keyword id="KW-0066">ATP synthesis</keyword>
<keyword id="KW-1003">Cell membrane</keyword>
<keyword id="KW-0139">CF(1)</keyword>
<keyword id="KW-0375">Hydrogen ion transport</keyword>
<keyword id="KW-0406">Ion transport</keyword>
<keyword id="KW-0472">Membrane</keyword>
<keyword id="KW-1185">Reference proteome</keyword>
<keyword id="KW-0813">Transport</keyword>
<feature type="chain" id="PRO_1000213027" description="ATP synthase gamma chain">
    <location>
        <begin position="1"/>
        <end position="297"/>
    </location>
</feature>
<protein>
    <recommendedName>
        <fullName evidence="1">ATP synthase gamma chain</fullName>
    </recommendedName>
    <alternativeName>
        <fullName evidence="1">ATP synthase F1 sector gamma subunit</fullName>
    </alternativeName>
    <alternativeName>
        <fullName evidence="1">F-ATPase gamma subunit</fullName>
    </alternativeName>
</protein>